<organism>
    <name type="scientific">Shigella flexneri</name>
    <dbReference type="NCBI Taxonomy" id="623"/>
    <lineage>
        <taxon>Bacteria</taxon>
        <taxon>Pseudomonadati</taxon>
        <taxon>Pseudomonadota</taxon>
        <taxon>Gammaproteobacteria</taxon>
        <taxon>Enterobacterales</taxon>
        <taxon>Enterobacteriaceae</taxon>
        <taxon>Shigella</taxon>
    </lineage>
</organism>
<protein>
    <recommendedName>
        <fullName evidence="1">Small ribosomal subunit protein uS4</fullName>
    </recommendedName>
    <alternativeName>
        <fullName evidence="2">30S ribosomal protein S4</fullName>
    </alternativeName>
</protein>
<dbReference type="EMBL" id="AE005674">
    <property type="protein sequence ID" value="AAN44791.2"/>
    <property type="status" value="ALT_INIT"/>
    <property type="molecule type" value="Genomic_DNA"/>
</dbReference>
<dbReference type="EMBL" id="AE014073">
    <property type="protein sequence ID" value="AAP19385.1"/>
    <property type="status" value="ALT_INIT"/>
    <property type="molecule type" value="Genomic_DNA"/>
</dbReference>
<dbReference type="RefSeq" id="NP_709084.2">
    <property type="nucleotide sequence ID" value="NC_004337.2"/>
</dbReference>
<dbReference type="RefSeq" id="WP_000135227.1">
    <property type="nucleotide sequence ID" value="NZ_CP123365.1"/>
</dbReference>
<dbReference type="SMR" id="P59132"/>
<dbReference type="STRING" id="198214.SF3328"/>
<dbReference type="PaxDb" id="198214-SF3328"/>
<dbReference type="GeneID" id="1027033"/>
<dbReference type="KEGG" id="sfl:SF3328"/>
<dbReference type="KEGG" id="sfx:S4434"/>
<dbReference type="PATRIC" id="fig|198214.7.peg.3937"/>
<dbReference type="HOGENOM" id="CLU_092403_0_2_6"/>
<dbReference type="Proteomes" id="UP000001006">
    <property type="component" value="Chromosome"/>
</dbReference>
<dbReference type="Proteomes" id="UP000002673">
    <property type="component" value="Chromosome"/>
</dbReference>
<dbReference type="GO" id="GO:0015935">
    <property type="term" value="C:small ribosomal subunit"/>
    <property type="evidence" value="ECO:0007669"/>
    <property type="project" value="InterPro"/>
</dbReference>
<dbReference type="GO" id="GO:0019843">
    <property type="term" value="F:rRNA binding"/>
    <property type="evidence" value="ECO:0007669"/>
    <property type="project" value="UniProtKB-UniRule"/>
</dbReference>
<dbReference type="GO" id="GO:0003735">
    <property type="term" value="F:structural constituent of ribosome"/>
    <property type="evidence" value="ECO:0007669"/>
    <property type="project" value="InterPro"/>
</dbReference>
<dbReference type="GO" id="GO:0042274">
    <property type="term" value="P:ribosomal small subunit biogenesis"/>
    <property type="evidence" value="ECO:0007669"/>
    <property type="project" value="TreeGrafter"/>
</dbReference>
<dbReference type="GO" id="GO:0006412">
    <property type="term" value="P:translation"/>
    <property type="evidence" value="ECO:0007669"/>
    <property type="project" value="UniProtKB-UniRule"/>
</dbReference>
<dbReference type="CDD" id="cd00165">
    <property type="entry name" value="S4"/>
    <property type="match status" value="1"/>
</dbReference>
<dbReference type="FunFam" id="1.10.1050.10:FF:000001">
    <property type="entry name" value="30S ribosomal protein S4"/>
    <property type="match status" value="1"/>
</dbReference>
<dbReference type="FunFam" id="3.10.290.10:FF:000001">
    <property type="entry name" value="30S ribosomal protein S4"/>
    <property type="match status" value="1"/>
</dbReference>
<dbReference type="Gene3D" id="1.10.1050.10">
    <property type="entry name" value="Ribosomal Protein S4 Delta 41, Chain A, domain 1"/>
    <property type="match status" value="1"/>
</dbReference>
<dbReference type="Gene3D" id="3.10.290.10">
    <property type="entry name" value="RNA-binding S4 domain"/>
    <property type="match status" value="1"/>
</dbReference>
<dbReference type="HAMAP" id="MF_01306_B">
    <property type="entry name" value="Ribosomal_uS4_B"/>
    <property type="match status" value="1"/>
</dbReference>
<dbReference type="InterPro" id="IPR022801">
    <property type="entry name" value="Ribosomal_uS4"/>
</dbReference>
<dbReference type="InterPro" id="IPR005709">
    <property type="entry name" value="Ribosomal_uS4_bac-type"/>
</dbReference>
<dbReference type="InterPro" id="IPR018079">
    <property type="entry name" value="Ribosomal_uS4_CS"/>
</dbReference>
<dbReference type="InterPro" id="IPR001912">
    <property type="entry name" value="Ribosomal_uS4_N"/>
</dbReference>
<dbReference type="InterPro" id="IPR002942">
    <property type="entry name" value="S4_RNA-bd"/>
</dbReference>
<dbReference type="InterPro" id="IPR036986">
    <property type="entry name" value="S4_RNA-bd_sf"/>
</dbReference>
<dbReference type="NCBIfam" id="NF003717">
    <property type="entry name" value="PRK05327.1"/>
    <property type="match status" value="1"/>
</dbReference>
<dbReference type="NCBIfam" id="TIGR01017">
    <property type="entry name" value="rpsD_bact"/>
    <property type="match status" value="1"/>
</dbReference>
<dbReference type="PANTHER" id="PTHR11831">
    <property type="entry name" value="30S 40S RIBOSOMAL PROTEIN"/>
    <property type="match status" value="1"/>
</dbReference>
<dbReference type="PANTHER" id="PTHR11831:SF4">
    <property type="entry name" value="SMALL RIBOSOMAL SUBUNIT PROTEIN US4M"/>
    <property type="match status" value="1"/>
</dbReference>
<dbReference type="Pfam" id="PF00163">
    <property type="entry name" value="Ribosomal_S4"/>
    <property type="match status" value="1"/>
</dbReference>
<dbReference type="Pfam" id="PF01479">
    <property type="entry name" value="S4"/>
    <property type="match status" value="1"/>
</dbReference>
<dbReference type="SMART" id="SM01390">
    <property type="entry name" value="Ribosomal_S4"/>
    <property type="match status" value="1"/>
</dbReference>
<dbReference type="SMART" id="SM00363">
    <property type="entry name" value="S4"/>
    <property type="match status" value="1"/>
</dbReference>
<dbReference type="SUPFAM" id="SSF55174">
    <property type="entry name" value="Alpha-L RNA-binding motif"/>
    <property type="match status" value="1"/>
</dbReference>
<dbReference type="PROSITE" id="PS00632">
    <property type="entry name" value="RIBOSOMAL_S4"/>
    <property type="match status" value="1"/>
</dbReference>
<dbReference type="PROSITE" id="PS50889">
    <property type="entry name" value="S4"/>
    <property type="match status" value="1"/>
</dbReference>
<keyword id="KW-1185">Reference proteome</keyword>
<keyword id="KW-0687">Ribonucleoprotein</keyword>
<keyword id="KW-0689">Ribosomal protein</keyword>
<keyword id="KW-0694">RNA-binding</keyword>
<keyword id="KW-0699">rRNA-binding</keyword>
<feature type="chain" id="PRO_0000132454" description="Small ribosomal subunit protein uS4">
    <location>
        <begin position="1"/>
        <end position="206"/>
    </location>
</feature>
<feature type="domain" description="S4 RNA-binding" evidence="1">
    <location>
        <begin position="96"/>
        <end position="156"/>
    </location>
</feature>
<feature type="sequence conflict" description="In Ref. 2; AAP19385." evidence="2" ref="2">
    <original>P</original>
    <variation>N</variation>
    <location>
        <position position="126"/>
    </location>
</feature>
<name>RS4_SHIFL</name>
<evidence type="ECO:0000255" key="1">
    <source>
        <dbReference type="HAMAP-Rule" id="MF_01306"/>
    </source>
</evidence>
<evidence type="ECO:0000305" key="2"/>
<gene>
    <name evidence="1" type="primary">rpsD</name>
    <name type="ordered locus">SF3328</name>
    <name type="ordered locus">S4434</name>
</gene>
<accession>P59132</accession>
<reference key="1">
    <citation type="journal article" date="2002" name="Nucleic Acids Res.">
        <title>Genome sequence of Shigella flexneri 2a: insights into pathogenicity through comparison with genomes of Escherichia coli K12 and O157.</title>
        <authorList>
            <person name="Jin Q."/>
            <person name="Yuan Z."/>
            <person name="Xu J."/>
            <person name="Wang Y."/>
            <person name="Shen Y."/>
            <person name="Lu W."/>
            <person name="Wang J."/>
            <person name="Liu H."/>
            <person name="Yang J."/>
            <person name="Yang F."/>
            <person name="Zhang X."/>
            <person name="Zhang J."/>
            <person name="Yang G."/>
            <person name="Wu H."/>
            <person name="Qu D."/>
            <person name="Dong J."/>
            <person name="Sun L."/>
            <person name="Xue Y."/>
            <person name="Zhao A."/>
            <person name="Gao Y."/>
            <person name="Zhu J."/>
            <person name="Kan B."/>
            <person name="Ding K."/>
            <person name="Chen S."/>
            <person name="Cheng H."/>
            <person name="Yao Z."/>
            <person name="He B."/>
            <person name="Chen R."/>
            <person name="Ma D."/>
            <person name="Qiang B."/>
            <person name="Wen Y."/>
            <person name="Hou Y."/>
            <person name="Yu J."/>
        </authorList>
    </citation>
    <scope>NUCLEOTIDE SEQUENCE [LARGE SCALE GENOMIC DNA]</scope>
    <source>
        <strain>301 / Serotype 2a</strain>
    </source>
</reference>
<reference key="2">
    <citation type="journal article" date="2003" name="Infect. Immun.">
        <title>Complete genome sequence and comparative genomics of Shigella flexneri serotype 2a strain 2457T.</title>
        <authorList>
            <person name="Wei J."/>
            <person name="Goldberg M.B."/>
            <person name="Burland V."/>
            <person name="Venkatesan M.M."/>
            <person name="Deng W."/>
            <person name="Fournier G."/>
            <person name="Mayhew G.F."/>
            <person name="Plunkett G. III"/>
            <person name="Rose D.J."/>
            <person name="Darling A."/>
            <person name="Mau B."/>
            <person name="Perna N.T."/>
            <person name="Payne S.M."/>
            <person name="Runyen-Janecky L.J."/>
            <person name="Zhou S."/>
            <person name="Schwartz D.C."/>
            <person name="Blattner F.R."/>
        </authorList>
    </citation>
    <scope>NUCLEOTIDE SEQUENCE [LARGE SCALE GENOMIC DNA]</scope>
    <source>
        <strain>ATCC 700930 / 2457T / Serotype 2a</strain>
    </source>
</reference>
<comment type="function">
    <text evidence="1">One of the primary rRNA binding proteins, it binds directly to 16S rRNA where it nucleates assembly of the body of the 30S subunit.</text>
</comment>
<comment type="function">
    <text evidence="1">With S5 and S12 plays an important role in translational accuracy.</text>
</comment>
<comment type="subunit">
    <text evidence="1">Part of the 30S ribosomal subunit. Contacts protein S5. The interaction surface between S4 and S5 is involved in control of translational fidelity.</text>
</comment>
<comment type="similarity">
    <text evidence="1">Belongs to the universal ribosomal protein uS4 family.</text>
</comment>
<comment type="sequence caution" evidence="2">
    <conflict type="erroneous initiation">
        <sequence resource="EMBL-CDS" id="AAN44791"/>
    </conflict>
    <text>Truncated N-terminus.</text>
</comment>
<comment type="sequence caution" evidence="2">
    <conflict type="erroneous initiation">
        <sequence resource="EMBL-CDS" id="AAP19385"/>
    </conflict>
    <text>Truncated N-terminus.</text>
</comment>
<sequence>MARYLGPKLKLSRREGTDLFLKSGVRAIDTKCKIEQAPGQHGARKPRLSDYGVQLREKQKVRRIYGVLERQFRNYYKEAARLKGNTGENLLALLEGRLDNVVYRMGFGATRAEARQLVSHKAIMVPGRVVNIASYQVSPNDVVSIREKAKKQSRVKAALELAEQREKPTWLEVDAGKMEGTFKRKPERSDLSADINEHLIVELYSK</sequence>
<proteinExistence type="inferred from homology"/>